<accession>Q97R63</accession>
<feature type="chain" id="PRO_0000102540" description="Endoribonuclease YbeY">
    <location>
        <begin position="1"/>
        <end position="165"/>
    </location>
</feature>
<feature type="binding site" evidence="1">
    <location>
        <position position="130"/>
    </location>
    <ligand>
        <name>Zn(2+)</name>
        <dbReference type="ChEBI" id="CHEBI:29105"/>
        <note>catalytic</note>
    </ligand>
</feature>
<feature type="binding site" evidence="1">
    <location>
        <position position="134"/>
    </location>
    <ligand>
        <name>Zn(2+)</name>
        <dbReference type="ChEBI" id="CHEBI:29105"/>
        <note>catalytic</note>
    </ligand>
</feature>
<feature type="binding site" evidence="1">
    <location>
        <position position="140"/>
    </location>
    <ligand>
        <name>Zn(2+)</name>
        <dbReference type="ChEBI" id="CHEBI:29105"/>
        <note>catalytic</note>
    </ligand>
</feature>
<proteinExistence type="inferred from homology"/>
<protein>
    <recommendedName>
        <fullName evidence="1">Endoribonuclease YbeY</fullName>
        <ecNumber evidence="1">3.1.-.-</ecNumber>
    </recommendedName>
</protein>
<organism>
    <name type="scientific">Streptococcus pneumoniae serotype 4 (strain ATCC BAA-334 / TIGR4)</name>
    <dbReference type="NCBI Taxonomy" id="170187"/>
    <lineage>
        <taxon>Bacteria</taxon>
        <taxon>Bacillati</taxon>
        <taxon>Bacillota</taxon>
        <taxon>Bacilli</taxon>
        <taxon>Lactobacillales</taxon>
        <taxon>Streptococcaceae</taxon>
        <taxon>Streptococcus</taxon>
    </lineage>
</organism>
<keyword id="KW-0963">Cytoplasm</keyword>
<keyword id="KW-0255">Endonuclease</keyword>
<keyword id="KW-0378">Hydrolase</keyword>
<keyword id="KW-0479">Metal-binding</keyword>
<keyword id="KW-0540">Nuclease</keyword>
<keyword id="KW-1185">Reference proteome</keyword>
<keyword id="KW-0690">Ribosome biogenesis</keyword>
<keyword id="KW-0698">rRNA processing</keyword>
<keyword id="KW-0862">Zinc</keyword>
<comment type="function">
    <text evidence="1">Single strand-specific metallo-endoribonuclease involved in late-stage 70S ribosome quality control and in maturation of the 3' terminus of the 16S rRNA.</text>
</comment>
<comment type="cofactor">
    <cofactor evidence="1">
        <name>Zn(2+)</name>
        <dbReference type="ChEBI" id="CHEBI:29105"/>
    </cofactor>
    <text evidence="1">Binds 1 zinc ion.</text>
</comment>
<comment type="subcellular location">
    <subcellularLocation>
        <location evidence="1">Cytoplasm</location>
    </subcellularLocation>
</comment>
<comment type="similarity">
    <text evidence="1">Belongs to the endoribonuclease YbeY family.</text>
</comment>
<name>YBEY_STRPN</name>
<reference key="1">
    <citation type="journal article" date="2001" name="Science">
        <title>Complete genome sequence of a virulent isolate of Streptococcus pneumoniae.</title>
        <authorList>
            <person name="Tettelin H."/>
            <person name="Nelson K.E."/>
            <person name="Paulsen I.T."/>
            <person name="Eisen J.A."/>
            <person name="Read T.D."/>
            <person name="Peterson S.N."/>
            <person name="Heidelberg J.F."/>
            <person name="DeBoy R.T."/>
            <person name="Haft D.H."/>
            <person name="Dodson R.J."/>
            <person name="Durkin A.S."/>
            <person name="Gwinn M.L."/>
            <person name="Kolonay J.F."/>
            <person name="Nelson W.C."/>
            <person name="Peterson J.D."/>
            <person name="Umayam L.A."/>
            <person name="White O."/>
            <person name="Salzberg S.L."/>
            <person name="Lewis M.R."/>
            <person name="Radune D."/>
            <person name="Holtzapple E.K."/>
            <person name="Khouri H.M."/>
            <person name="Wolf A.M."/>
            <person name="Utterback T.R."/>
            <person name="Hansen C.L."/>
            <person name="McDonald L.A."/>
            <person name="Feldblyum T.V."/>
            <person name="Angiuoli S.V."/>
            <person name="Dickinson T."/>
            <person name="Hickey E.K."/>
            <person name="Holt I.E."/>
            <person name="Loftus B.J."/>
            <person name="Yang F."/>
            <person name="Smith H.O."/>
            <person name="Venter J.C."/>
            <person name="Dougherty B.A."/>
            <person name="Morrison D.A."/>
            <person name="Hollingshead S.K."/>
            <person name="Fraser C.M."/>
        </authorList>
    </citation>
    <scope>NUCLEOTIDE SEQUENCE [LARGE SCALE GENOMIC DNA]</scope>
    <source>
        <strain>ATCC BAA-334 / TIGR4</strain>
    </source>
</reference>
<evidence type="ECO:0000255" key="1">
    <source>
        <dbReference type="HAMAP-Rule" id="MF_00009"/>
    </source>
</evidence>
<sequence length="165" mass="19234">MYIEMVDETGQVSKEMLQQTQEILEFAAQKLGKEDKEMAVTFVTNERSHELNLEYRNTDRPTDVISLEYKPELEIAFDEEDLLENSELAEMMSEFDAYIGELFISIDKAHEQAEEYGHSFEREMGFLAVHGFLHINGYDHYTPEEEAEMFGLQEEILTAYGLTRQ</sequence>
<dbReference type="EC" id="3.1.-.-" evidence="1"/>
<dbReference type="EMBL" id="AE005672">
    <property type="protein sequence ID" value="AAK75088.1"/>
    <property type="molecule type" value="Genomic_DNA"/>
</dbReference>
<dbReference type="PIR" id="G95111">
    <property type="entry name" value="G95111"/>
</dbReference>
<dbReference type="RefSeq" id="WP_000275161.1">
    <property type="nucleotide sequence ID" value="NZ_CP155539.1"/>
</dbReference>
<dbReference type="SMR" id="Q97R63"/>
<dbReference type="PaxDb" id="170187-SP_0967"/>
<dbReference type="EnsemblBacteria" id="AAK75088">
    <property type="protein sequence ID" value="AAK75088"/>
    <property type="gene ID" value="SP_0967"/>
</dbReference>
<dbReference type="KEGG" id="spn:SP_0967"/>
<dbReference type="eggNOG" id="COG0319">
    <property type="taxonomic scope" value="Bacteria"/>
</dbReference>
<dbReference type="PhylomeDB" id="Q97R63"/>
<dbReference type="BioCyc" id="SPNE170187:G1FZB-995-MONOMER"/>
<dbReference type="Proteomes" id="UP000000585">
    <property type="component" value="Chromosome"/>
</dbReference>
<dbReference type="GO" id="GO:0005737">
    <property type="term" value="C:cytoplasm"/>
    <property type="evidence" value="ECO:0007669"/>
    <property type="project" value="UniProtKB-SubCell"/>
</dbReference>
<dbReference type="GO" id="GO:0004222">
    <property type="term" value="F:metalloendopeptidase activity"/>
    <property type="evidence" value="ECO:0007669"/>
    <property type="project" value="InterPro"/>
</dbReference>
<dbReference type="GO" id="GO:0004521">
    <property type="term" value="F:RNA endonuclease activity"/>
    <property type="evidence" value="ECO:0007669"/>
    <property type="project" value="UniProtKB-UniRule"/>
</dbReference>
<dbReference type="GO" id="GO:0008270">
    <property type="term" value="F:zinc ion binding"/>
    <property type="evidence" value="ECO:0007669"/>
    <property type="project" value="UniProtKB-UniRule"/>
</dbReference>
<dbReference type="GO" id="GO:0006364">
    <property type="term" value="P:rRNA processing"/>
    <property type="evidence" value="ECO:0007669"/>
    <property type="project" value="UniProtKB-UniRule"/>
</dbReference>
<dbReference type="Gene3D" id="3.40.390.30">
    <property type="entry name" value="Metalloproteases ('zincins'), catalytic domain"/>
    <property type="match status" value="1"/>
</dbReference>
<dbReference type="HAMAP" id="MF_00009">
    <property type="entry name" value="Endoribonucl_YbeY"/>
    <property type="match status" value="1"/>
</dbReference>
<dbReference type="InterPro" id="IPR023091">
    <property type="entry name" value="MetalPrtase_cat_dom_sf_prd"/>
</dbReference>
<dbReference type="InterPro" id="IPR002036">
    <property type="entry name" value="YbeY"/>
</dbReference>
<dbReference type="InterPro" id="IPR020549">
    <property type="entry name" value="YbeY_CS"/>
</dbReference>
<dbReference type="NCBIfam" id="TIGR00043">
    <property type="entry name" value="rRNA maturation RNase YbeY"/>
    <property type="match status" value="1"/>
</dbReference>
<dbReference type="PANTHER" id="PTHR46986">
    <property type="entry name" value="ENDORIBONUCLEASE YBEY, CHLOROPLASTIC"/>
    <property type="match status" value="1"/>
</dbReference>
<dbReference type="PANTHER" id="PTHR46986:SF1">
    <property type="entry name" value="ENDORIBONUCLEASE YBEY, CHLOROPLASTIC"/>
    <property type="match status" value="1"/>
</dbReference>
<dbReference type="Pfam" id="PF02130">
    <property type="entry name" value="YbeY"/>
    <property type="match status" value="1"/>
</dbReference>
<dbReference type="SUPFAM" id="SSF55486">
    <property type="entry name" value="Metalloproteases ('zincins'), catalytic domain"/>
    <property type="match status" value="1"/>
</dbReference>
<dbReference type="PROSITE" id="PS01306">
    <property type="entry name" value="UPF0054"/>
    <property type="match status" value="1"/>
</dbReference>
<gene>
    <name evidence="1" type="primary">ybeY</name>
    <name type="ordered locus">SP_0967</name>
</gene>